<gene>
    <name type="primary">RBG1</name>
    <name type="synonym">FUN11</name>
    <name type="ordered locus">YAL036C</name>
</gene>
<proteinExistence type="evidence at protein level"/>
<evidence type="ECO:0000255" key="1">
    <source>
        <dbReference type="PROSITE-ProRule" id="PRU01047"/>
    </source>
</evidence>
<evidence type="ECO:0000255" key="2">
    <source>
        <dbReference type="PROSITE-ProRule" id="PRU01228"/>
    </source>
</evidence>
<evidence type="ECO:0000269" key="3">
    <source>
    </source>
</evidence>
<evidence type="ECO:0000269" key="4">
    <source>
    </source>
</evidence>
<evidence type="ECO:0000269" key="5">
    <source>
    </source>
</evidence>
<evidence type="ECO:0000269" key="6">
    <source>
    </source>
</evidence>
<evidence type="ECO:0007744" key="7">
    <source>
    </source>
</evidence>
<evidence type="ECO:0007829" key="8">
    <source>
        <dbReference type="PDB" id="4A9A"/>
    </source>
</evidence>
<protein>
    <recommendedName>
        <fullName>Ribosome-interacting GTPase 1</fullName>
    </recommendedName>
    <alternativeName>
        <fullName>GTP-binding protein RBG1</fullName>
    </alternativeName>
    <alternativeName>
        <fullName>Genetically interacts with ribosomal genes protein 1</fullName>
    </alternativeName>
</protein>
<comment type="function">
    <text evidence="6">Involved in ribosomal function.</text>
</comment>
<comment type="subunit">
    <text evidence="5 6">Associates with translating polyribosomes. Interacts with GIR2, TMA46, YAP1 and YGR250C.</text>
</comment>
<comment type="interaction">
    <interactant intactId="EBI-20651">
        <id>P39729</id>
    </interactant>
    <interactant intactId="EBI-7618">
        <id>Q03768</id>
        <label>GIR2</label>
    </interactant>
    <organismsDiffer>false</organismsDiffer>
    <experiments>3</experiments>
</comment>
<comment type="subcellular location">
    <subcellularLocation>
        <location evidence="3">Cytoplasm</location>
    </subcellularLocation>
</comment>
<comment type="miscellaneous">
    <text evidence="4">Present with 11700 molecules/cell in log phase SD medium.</text>
</comment>
<comment type="similarity">
    <text evidence="1">Belongs to the TRAFAC class OBG-HflX-like GTPase superfamily. OBG GTPase family.</text>
</comment>
<keyword id="KW-0002">3D-structure</keyword>
<keyword id="KW-0007">Acetylation</keyword>
<keyword id="KW-0963">Cytoplasm</keyword>
<keyword id="KW-0342">GTP-binding</keyword>
<keyword id="KW-0547">Nucleotide-binding</keyword>
<keyword id="KW-1185">Reference proteome</keyword>
<accession>P39729</accession>
<accession>D6VPI1</accession>
<dbReference type="EMBL" id="U12980">
    <property type="protein sequence ID" value="AAC04995.1"/>
    <property type="molecule type" value="Genomic_DNA"/>
</dbReference>
<dbReference type="EMBL" id="AY693042">
    <property type="protein sequence ID" value="AAT93061.1"/>
    <property type="molecule type" value="Genomic_DNA"/>
</dbReference>
<dbReference type="EMBL" id="BK006935">
    <property type="protein sequence ID" value="DAA06951.1"/>
    <property type="molecule type" value="Genomic_DNA"/>
</dbReference>
<dbReference type="PIR" id="S51983">
    <property type="entry name" value="S51983"/>
</dbReference>
<dbReference type="RefSeq" id="NP_009364.1">
    <property type="nucleotide sequence ID" value="NM_001178181.1"/>
</dbReference>
<dbReference type="PDB" id="4A9A">
    <property type="method" value="X-ray"/>
    <property type="resolution" value="2.67 A"/>
    <property type="chains" value="A/B=1-369"/>
</dbReference>
<dbReference type="PDBsum" id="4A9A"/>
<dbReference type="SMR" id="P39729"/>
<dbReference type="BioGRID" id="31729">
    <property type="interactions" value="179"/>
</dbReference>
<dbReference type="DIP" id="DIP-1750N"/>
<dbReference type="FunCoup" id="P39729">
    <property type="interactions" value="1506"/>
</dbReference>
<dbReference type="IntAct" id="P39729">
    <property type="interactions" value="70"/>
</dbReference>
<dbReference type="MINT" id="P39729"/>
<dbReference type="STRING" id="4932.YAL036C"/>
<dbReference type="iPTMnet" id="P39729"/>
<dbReference type="PaxDb" id="4932-YAL036C"/>
<dbReference type="PeptideAtlas" id="P39729"/>
<dbReference type="EnsemblFungi" id="YAL036C_mRNA">
    <property type="protein sequence ID" value="YAL036C"/>
    <property type="gene ID" value="YAL036C"/>
</dbReference>
<dbReference type="GeneID" id="851195"/>
<dbReference type="KEGG" id="sce:YAL036C"/>
<dbReference type="AGR" id="SGD:S000000034"/>
<dbReference type="SGD" id="S000000034">
    <property type="gene designation" value="RBG1"/>
</dbReference>
<dbReference type="VEuPathDB" id="FungiDB:YAL036C"/>
<dbReference type="eggNOG" id="KOG1487">
    <property type="taxonomic scope" value="Eukaryota"/>
</dbReference>
<dbReference type="GeneTree" id="ENSGT00940000153340"/>
<dbReference type="HOGENOM" id="CLU_044997_0_0_1"/>
<dbReference type="InParanoid" id="P39729"/>
<dbReference type="OMA" id="SAKHPGQ"/>
<dbReference type="OrthoDB" id="603at2759"/>
<dbReference type="BioCyc" id="YEAST:G3O-28846-MONOMER"/>
<dbReference type="BioGRID-ORCS" id="851195">
    <property type="hits" value="2 hits in 10 CRISPR screens"/>
</dbReference>
<dbReference type="CD-CODE" id="E03F929F">
    <property type="entry name" value="Stress granule"/>
</dbReference>
<dbReference type="EvolutionaryTrace" id="P39729"/>
<dbReference type="PRO" id="PR:P39729"/>
<dbReference type="Proteomes" id="UP000002311">
    <property type="component" value="Chromosome I"/>
</dbReference>
<dbReference type="RNAct" id="P39729">
    <property type="molecule type" value="protein"/>
</dbReference>
<dbReference type="GO" id="GO:0005737">
    <property type="term" value="C:cytoplasm"/>
    <property type="evidence" value="ECO:0007005"/>
    <property type="project" value="SGD"/>
</dbReference>
<dbReference type="GO" id="GO:0010494">
    <property type="term" value="C:cytoplasmic stress granule"/>
    <property type="evidence" value="ECO:0007005"/>
    <property type="project" value="SGD"/>
</dbReference>
<dbReference type="GO" id="GO:0005777">
    <property type="term" value="C:peroxisome"/>
    <property type="evidence" value="ECO:0000314"/>
    <property type="project" value="SGD"/>
</dbReference>
<dbReference type="GO" id="GO:0005525">
    <property type="term" value="F:GTP binding"/>
    <property type="evidence" value="ECO:0000314"/>
    <property type="project" value="SGD"/>
</dbReference>
<dbReference type="GO" id="GO:0003924">
    <property type="term" value="F:GTPase activity"/>
    <property type="evidence" value="ECO:0007669"/>
    <property type="project" value="InterPro"/>
</dbReference>
<dbReference type="GO" id="GO:0002181">
    <property type="term" value="P:cytoplasmic translation"/>
    <property type="evidence" value="ECO:0000316"/>
    <property type="project" value="SGD"/>
</dbReference>
<dbReference type="GO" id="GO:1903833">
    <property type="term" value="P:positive regulation of cellular response to amino acid starvation"/>
    <property type="evidence" value="ECO:0000316"/>
    <property type="project" value="SGD"/>
</dbReference>
<dbReference type="CDD" id="cd01896">
    <property type="entry name" value="DRG"/>
    <property type="match status" value="1"/>
</dbReference>
<dbReference type="CDD" id="cd17230">
    <property type="entry name" value="TGS_DRG1"/>
    <property type="match status" value="1"/>
</dbReference>
<dbReference type="FunFam" id="3.10.20.30:FF:000003">
    <property type="entry name" value="Developmentally-regulated GTP-binding protein 1"/>
    <property type="match status" value="1"/>
</dbReference>
<dbReference type="FunFam" id="3.40.50.300:FF:000740">
    <property type="entry name" value="Putative GTP-binding protein 1"/>
    <property type="match status" value="1"/>
</dbReference>
<dbReference type="Gene3D" id="3.10.20.30">
    <property type="match status" value="1"/>
</dbReference>
<dbReference type="Gene3D" id="6.10.140.1070">
    <property type="match status" value="2"/>
</dbReference>
<dbReference type="InterPro" id="IPR012675">
    <property type="entry name" value="Beta-grasp_dom_sf"/>
</dbReference>
<dbReference type="InterPro" id="IPR045001">
    <property type="entry name" value="DRG"/>
</dbReference>
<dbReference type="InterPro" id="IPR031167">
    <property type="entry name" value="G_OBG"/>
</dbReference>
<dbReference type="InterPro" id="IPR006073">
    <property type="entry name" value="GTP-bd"/>
</dbReference>
<dbReference type="InterPro" id="IPR031662">
    <property type="entry name" value="GTP-binding_2"/>
</dbReference>
<dbReference type="InterPro" id="IPR006074">
    <property type="entry name" value="GTP1-OBG_CS"/>
</dbReference>
<dbReference type="InterPro" id="IPR027417">
    <property type="entry name" value="P-loop_NTPase"/>
</dbReference>
<dbReference type="InterPro" id="IPR005225">
    <property type="entry name" value="Small_GTP-bd"/>
</dbReference>
<dbReference type="InterPro" id="IPR004095">
    <property type="entry name" value="TGS"/>
</dbReference>
<dbReference type="InterPro" id="IPR012676">
    <property type="entry name" value="TGS-like"/>
</dbReference>
<dbReference type="NCBIfam" id="TIGR00231">
    <property type="entry name" value="small_GTP"/>
    <property type="match status" value="1"/>
</dbReference>
<dbReference type="PANTHER" id="PTHR43127">
    <property type="entry name" value="DEVELOPMENTALLY-REGULATED GTP-BINDING PROTEIN 2"/>
    <property type="match status" value="1"/>
</dbReference>
<dbReference type="Pfam" id="PF01926">
    <property type="entry name" value="MMR_HSR1"/>
    <property type="match status" value="1"/>
</dbReference>
<dbReference type="Pfam" id="PF16897">
    <property type="entry name" value="MMR_HSR1_Xtn"/>
    <property type="match status" value="1"/>
</dbReference>
<dbReference type="Pfam" id="PF02824">
    <property type="entry name" value="TGS"/>
    <property type="match status" value="1"/>
</dbReference>
<dbReference type="PRINTS" id="PR00326">
    <property type="entry name" value="GTP1OBG"/>
</dbReference>
<dbReference type="SUPFAM" id="SSF52540">
    <property type="entry name" value="P-loop containing nucleoside triphosphate hydrolases"/>
    <property type="match status" value="1"/>
</dbReference>
<dbReference type="SUPFAM" id="SSF81271">
    <property type="entry name" value="TGS-like"/>
    <property type="match status" value="1"/>
</dbReference>
<dbReference type="PROSITE" id="PS51710">
    <property type="entry name" value="G_OBG"/>
    <property type="match status" value="1"/>
</dbReference>
<dbReference type="PROSITE" id="PS00905">
    <property type="entry name" value="GTP1_OBG"/>
    <property type="match status" value="1"/>
</dbReference>
<dbReference type="PROSITE" id="PS51880">
    <property type="entry name" value="TGS"/>
    <property type="match status" value="1"/>
</dbReference>
<organism>
    <name type="scientific">Saccharomyces cerevisiae (strain ATCC 204508 / S288c)</name>
    <name type="common">Baker's yeast</name>
    <dbReference type="NCBI Taxonomy" id="559292"/>
    <lineage>
        <taxon>Eukaryota</taxon>
        <taxon>Fungi</taxon>
        <taxon>Dikarya</taxon>
        <taxon>Ascomycota</taxon>
        <taxon>Saccharomycotina</taxon>
        <taxon>Saccharomycetes</taxon>
        <taxon>Saccharomycetales</taxon>
        <taxon>Saccharomycetaceae</taxon>
        <taxon>Saccharomyces</taxon>
    </lineage>
</organism>
<sequence>MSTTVEKIKAIEDEMARTQKNKATSFHLGQLKAKLAKLRRELLTSASSGSGGGAGIGFDVARTGVASVGFVGFPSVGKSTLLSKLTGTESEAAEYEFTTLVTVPGVIRYKGAKIQMLDLPGIIDGAKDGRGRGKQVIAVARTCNLLFIILDVNKPLHHKQIIEKELEGVGIRLNKTPPDILIKKKEKGGISITNTVPLTHLGNDEIRAVMSEYRINSAEIAFRCDATVDDLIDVLEASSRRYMPAIYVLNKIDSLSIEELELLYRIPNAVPISSGQDWNLDELLQVMWDRLNLVRIYTKPKGQIPDFTDPVVLRSDRCSVKDFCNQIHKSLVDDFRNALVYGSSVKHQPQYVGLSHILEDEDVVTILKK</sequence>
<reference key="1">
    <citation type="journal article" date="1995" name="Proc. Natl. Acad. Sci. U.S.A.">
        <title>The nucleotide sequence of chromosome I from Saccharomyces cerevisiae.</title>
        <authorList>
            <person name="Bussey H."/>
            <person name="Kaback D.B."/>
            <person name="Zhong W.-W."/>
            <person name="Vo D.H."/>
            <person name="Clark M.W."/>
            <person name="Fortin N."/>
            <person name="Hall J."/>
            <person name="Ouellette B.F.F."/>
            <person name="Keng T."/>
            <person name="Barton A.B."/>
            <person name="Su Y."/>
            <person name="Davies C.J."/>
            <person name="Storms R.K."/>
        </authorList>
    </citation>
    <scope>NUCLEOTIDE SEQUENCE [LARGE SCALE GENOMIC DNA]</scope>
    <source>
        <strain>ATCC 204508 / S288c</strain>
    </source>
</reference>
<reference key="2">
    <citation type="journal article" date="2014" name="G3 (Bethesda)">
        <title>The reference genome sequence of Saccharomyces cerevisiae: Then and now.</title>
        <authorList>
            <person name="Engel S.R."/>
            <person name="Dietrich F.S."/>
            <person name="Fisk D.G."/>
            <person name="Binkley G."/>
            <person name="Balakrishnan R."/>
            <person name="Costanzo M.C."/>
            <person name="Dwight S.S."/>
            <person name="Hitz B.C."/>
            <person name="Karra K."/>
            <person name="Nash R.S."/>
            <person name="Weng S."/>
            <person name="Wong E.D."/>
            <person name="Lloyd P."/>
            <person name="Skrzypek M.S."/>
            <person name="Miyasato S.R."/>
            <person name="Simison M."/>
            <person name="Cherry J.M."/>
        </authorList>
    </citation>
    <scope>GENOME REANNOTATION</scope>
    <source>
        <strain>ATCC 204508 / S288c</strain>
    </source>
</reference>
<reference key="3">
    <citation type="journal article" date="2007" name="Genome Res.">
        <title>Approaching a complete repository of sequence-verified protein-encoding clones for Saccharomyces cerevisiae.</title>
        <authorList>
            <person name="Hu Y."/>
            <person name="Rolfs A."/>
            <person name="Bhullar B."/>
            <person name="Murthy T.V.S."/>
            <person name="Zhu C."/>
            <person name="Berger M.F."/>
            <person name="Camargo A.A."/>
            <person name="Kelley F."/>
            <person name="McCarron S."/>
            <person name="Jepson D."/>
            <person name="Richardson A."/>
            <person name="Raphael J."/>
            <person name="Moreira D."/>
            <person name="Taycher E."/>
            <person name="Zuo D."/>
            <person name="Mohr S."/>
            <person name="Kane M.F."/>
            <person name="Williamson J."/>
            <person name="Simpson A.J.G."/>
            <person name="Bulyk M.L."/>
            <person name="Harlow E."/>
            <person name="Marsischky G."/>
            <person name="Kolodner R.D."/>
            <person name="LaBaer J."/>
        </authorList>
    </citation>
    <scope>NUCLEOTIDE SEQUENCE [GENOMIC DNA]</scope>
    <source>
        <strain>ATCC 204508 / S288c</strain>
    </source>
</reference>
<reference key="4">
    <citation type="journal article" date="2003" name="Nature">
        <title>Global analysis of protein localization in budding yeast.</title>
        <authorList>
            <person name="Huh W.-K."/>
            <person name="Falvo J.V."/>
            <person name="Gerke L.C."/>
            <person name="Carroll A.S."/>
            <person name="Howson R.W."/>
            <person name="Weissman J.S."/>
            <person name="O'Shea E.K."/>
        </authorList>
    </citation>
    <scope>SUBCELLULAR LOCATION [LARGE SCALE ANALYSIS]</scope>
</reference>
<reference key="5">
    <citation type="journal article" date="2003" name="Nature">
        <title>Global analysis of protein expression in yeast.</title>
        <authorList>
            <person name="Ghaemmaghami S."/>
            <person name="Huh W.-K."/>
            <person name="Bower K."/>
            <person name="Howson R.W."/>
            <person name="Belle A."/>
            <person name="Dephoure N."/>
            <person name="O'Shea E.K."/>
            <person name="Weissman J.S."/>
        </authorList>
    </citation>
    <scope>LEVEL OF PROTEIN EXPRESSION [LARGE SCALE ANALYSIS]</scope>
</reference>
<reference key="6">
    <citation type="journal article" date="2006" name="Genes Dev.">
        <title>Systematic identification and functional screens of uncharacterized proteins associated with eukaryotic ribosomal complexes.</title>
        <authorList>
            <person name="Fleischer T.C."/>
            <person name="Weaver C.M."/>
            <person name="McAfee K.J."/>
            <person name="Jennings J.L."/>
            <person name="Link A.J."/>
        </authorList>
    </citation>
    <scope>IDENTIFICATION BY MASS SPECTROMETRY</scope>
    <scope>INTERACTION WITH RIBOSOMES AND TMA46</scope>
</reference>
<reference key="7">
    <citation type="journal article" date="2009" name="Eukaryot. Cell">
        <title>Saccharomyces cerevisiae Rbg1 protein and its binding partner Gir2 interact on polyribosomes with Gcn1.</title>
        <authorList>
            <person name="Wout P.K."/>
            <person name="Sattlegger E."/>
            <person name="Sullivan S.M."/>
            <person name="Maddock J.R."/>
        </authorList>
    </citation>
    <scope>FUNCTION</scope>
    <scope>ASSOCIATION WITH POLYRIBOSOMES</scope>
    <scope>INTERACTION WITH GIR2; TMA46; YAP1 AND YGR250C</scope>
</reference>
<reference key="8">
    <citation type="journal article" date="2012" name="Proc. Natl. Acad. Sci. U.S.A.">
        <title>N-terminal acetylome analyses and functional insights of the N-terminal acetyltransferase NatB.</title>
        <authorList>
            <person name="Van Damme P."/>
            <person name="Lasa M."/>
            <person name="Polevoda B."/>
            <person name="Gazquez C."/>
            <person name="Elosegui-Artola A."/>
            <person name="Kim D.S."/>
            <person name="De Juan-Pardo E."/>
            <person name="Demeyer K."/>
            <person name="Hole K."/>
            <person name="Larrea E."/>
            <person name="Timmerman E."/>
            <person name="Prieto J."/>
            <person name="Arnesen T."/>
            <person name="Sherman F."/>
            <person name="Gevaert K."/>
            <person name="Aldabe R."/>
        </authorList>
    </citation>
    <scope>ACETYLATION [LARGE SCALE ANALYSIS] AT SER-2</scope>
    <scope>CLEAVAGE OF INITIATOR METHIONINE [LARGE SCALE ANALYSIS]</scope>
    <scope>IDENTIFICATION BY MASS SPECTROMETRY [LARGE SCALE ANALYSIS]</scope>
</reference>
<name>RBG1_YEAST</name>
<feature type="initiator methionine" description="Removed" evidence="7">
    <location>
        <position position="1"/>
    </location>
</feature>
<feature type="chain" id="PRO_0000205449" description="Ribosome-interacting GTPase 1">
    <location>
        <begin position="2"/>
        <end position="369"/>
    </location>
</feature>
<feature type="domain" description="OBG-type G" evidence="1">
    <location>
        <begin position="66"/>
        <end position="292"/>
    </location>
</feature>
<feature type="domain" description="TGS" evidence="2">
    <location>
        <begin position="292"/>
        <end position="368"/>
    </location>
</feature>
<feature type="binding site" evidence="1">
    <location>
        <begin position="72"/>
        <end position="79"/>
    </location>
    <ligand>
        <name>GTP</name>
        <dbReference type="ChEBI" id="CHEBI:37565"/>
    </ligand>
</feature>
<feature type="binding site" evidence="1">
    <location>
        <begin position="118"/>
        <end position="122"/>
    </location>
    <ligand>
        <name>GTP</name>
        <dbReference type="ChEBI" id="CHEBI:37565"/>
    </ligand>
</feature>
<feature type="binding site" evidence="1">
    <location>
        <begin position="250"/>
        <end position="253"/>
    </location>
    <ligand>
        <name>GTP</name>
        <dbReference type="ChEBI" id="CHEBI:37565"/>
    </ligand>
</feature>
<feature type="modified residue" description="N-acetylserine" evidence="7">
    <location>
        <position position="2"/>
    </location>
</feature>
<feature type="helix" evidence="8">
    <location>
        <begin position="3"/>
        <end position="17"/>
    </location>
</feature>
<feature type="turn" evidence="8">
    <location>
        <begin position="22"/>
        <end position="24"/>
    </location>
</feature>
<feature type="helix" evidence="8">
    <location>
        <begin position="25"/>
        <end position="43"/>
    </location>
</feature>
<feature type="strand" evidence="8">
    <location>
        <begin position="47"/>
        <end position="49"/>
    </location>
</feature>
<feature type="turn" evidence="8">
    <location>
        <begin position="56"/>
        <end position="58"/>
    </location>
</feature>
<feature type="strand" evidence="8">
    <location>
        <begin position="64"/>
        <end position="71"/>
    </location>
</feature>
<feature type="helix" evidence="8">
    <location>
        <begin position="76"/>
        <end position="86"/>
    </location>
</feature>
<feature type="helix" evidence="8">
    <location>
        <begin position="92"/>
        <end position="94"/>
    </location>
</feature>
<feature type="strand" evidence="8">
    <location>
        <begin position="102"/>
        <end position="109"/>
    </location>
</feature>
<feature type="strand" evidence="8">
    <location>
        <begin position="112"/>
        <end position="118"/>
    </location>
</feature>
<feature type="helix" evidence="8">
    <location>
        <begin position="120"/>
        <end position="122"/>
    </location>
</feature>
<feature type="helix" evidence="8">
    <location>
        <begin position="132"/>
        <end position="142"/>
    </location>
</feature>
<feature type="strand" evidence="8">
    <location>
        <begin position="144"/>
        <end position="151"/>
    </location>
</feature>
<feature type="helix" evidence="8">
    <location>
        <begin position="155"/>
        <end position="168"/>
    </location>
</feature>
<feature type="strand" evidence="8">
    <location>
        <begin position="171"/>
        <end position="173"/>
    </location>
</feature>
<feature type="strand" evidence="8">
    <location>
        <begin position="180"/>
        <end position="184"/>
    </location>
</feature>
<feature type="strand" evidence="8">
    <location>
        <begin position="186"/>
        <end position="188"/>
    </location>
</feature>
<feature type="strand" evidence="8">
    <location>
        <begin position="190"/>
        <end position="196"/>
    </location>
</feature>
<feature type="helix" evidence="8">
    <location>
        <begin position="203"/>
        <end position="212"/>
    </location>
</feature>
<feature type="strand" evidence="8">
    <location>
        <begin position="217"/>
        <end position="222"/>
    </location>
</feature>
<feature type="helix" evidence="8">
    <location>
        <begin position="228"/>
        <end position="235"/>
    </location>
</feature>
<feature type="turn" evidence="8">
    <location>
        <begin position="236"/>
        <end position="239"/>
    </location>
</feature>
<feature type="strand" evidence="8">
    <location>
        <begin position="241"/>
        <end position="243"/>
    </location>
</feature>
<feature type="strand" evidence="8">
    <location>
        <begin position="245"/>
        <end position="250"/>
    </location>
</feature>
<feature type="helix" evidence="8">
    <location>
        <begin position="252"/>
        <end position="254"/>
    </location>
</feature>
<feature type="helix" evidence="8">
    <location>
        <begin position="257"/>
        <end position="263"/>
    </location>
</feature>
<feature type="strand" evidence="8">
    <location>
        <begin position="269"/>
        <end position="271"/>
    </location>
</feature>
<feature type="turn" evidence="8">
    <location>
        <begin position="274"/>
        <end position="276"/>
    </location>
</feature>
<feature type="helix" evidence="8">
    <location>
        <begin position="280"/>
        <end position="291"/>
    </location>
</feature>
<feature type="strand" evidence="8">
    <location>
        <begin position="294"/>
        <end position="298"/>
    </location>
</feature>
<feature type="strand" evidence="8">
    <location>
        <begin position="301"/>
        <end position="303"/>
    </location>
</feature>
<feature type="strand" evidence="8">
    <location>
        <begin position="307"/>
        <end position="309"/>
    </location>
</feature>
<feature type="strand" evidence="8">
    <location>
        <begin position="311"/>
        <end position="314"/>
    </location>
</feature>
<feature type="helix" evidence="8">
    <location>
        <begin position="320"/>
        <end position="327"/>
    </location>
</feature>
<feature type="helix" evidence="8">
    <location>
        <begin position="329"/>
        <end position="334"/>
    </location>
</feature>
<feature type="strand" evidence="8">
    <location>
        <begin position="335"/>
        <end position="342"/>
    </location>
</feature>
<feature type="strand" evidence="8">
    <location>
        <begin position="345"/>
        <end position="352"/>
    </location>
</feature>
<feature type="strand" evidence="8">
    <location>
        <begin position="363"/>
        <end position="368"/>
    </location>
</feature>